<name>MNTH_STAES</name>
<proteinExistence type="inferred from homology"/>
<evidence type="ECO:0000255" key="1">
    <source>
        <dbReference type="HAMAP-Rule" id="MF_00221"/>
    </source>
</evidence>
<protein>
    <recommendedName>
        <fullName evidence="1">Divalent metal cation transporter MntH</fullName>
    </recommendedName>
</protein>
<dbReference type="EMBL" id="AE015929">
    <property type="protein sequence ID" value="AAO04400.1"/>
    <property type="molecule type" value="Genomic_DNA"/>
</dbReference>
<dbReference type="RefSeq" id="NP_764358.1">
    <property type="nucleotide sequence ID" value="NC_004461.1"/>
</dbReference>
<dbReference type="RefSeq" id="WP_002439344.1">
    <property type="nucleotide sequence ID" value="NZ_WBME01000031.1"/>
</dbReference>
<dbReference type="SMR" id="Q8CPM6"/>
<dbReference type="KEGG" id="sep:SE_0803"/>
<dbReference type="PATRIC" id="fig|176280.10.peg.776"/>
<dbReference type="eggNOG" id="COG1914">
    <property type="taxonomic scope" value="Bacteria"/>
</dbReference>
<dbReference type="HOGENOM" id="CLU_020088_2_0_9"/>
<dbReference type="OrthoDB" id="9787548at2"/>
<dbReference type="Proteomes" id="UP000001411">
    <property type="component" value="Chromosome"/>
</dbReference>
<dbReference type="GO" id="GO:0005886">
    <property type="term" value="C:plasma membrane"/>
    <property type="evidence" value="ECO:0007669"/>
    <property type="project" value="UniProtKB-SubCell"/>
</dbReference>
<dbReference type="GO" id="GO:0015086">
    <property type="term" value="F:cadmium ion transmembrane transporter activity"/>
    <property type="evidence" value="ECO:0007669"/>
    <property type="project" value="TreeGrafter"/>
</dbReference>
<dbReference type="GO" id="GO:0005384">
    <property type="term" value="F:manganese ion transmembrane transporter activity"/>
    <property type="evidence" value="ECO:0007669"/>
    <property type="project" value="TreeGrafter"/>
</dbReference>
<dbReference type="GO" id="GO:0046872">
    <property type="term" value="F:metal ion binding"/>
    <property type="evidence" value="ECO:0007669"/>
    <property type="project" value="UniProtKB-UniRule"/>
</dbReference>
<dbReference type="GO" id="GO:0015293">
    <property type="term" value="F:symporter activity"/>
    <property type="evidence" value="ECO:0007669"/>
    <property type="project" value="UniProtKB-UniRule"/>
</dbReference>
<dbReference type="GO" id="GO:0034755">
    <property type="term" value="P:iron ion transmembrane transport"/>
    <property type="evidence" value="ECO:0007669"/>
    <property type="project" value="TreeGrafter"/>
</dbReference>
<dbReference type="HAMAP" id="MF_00221">
    <property type="entry name" value="NRAMP"/>
    <property type="match status" value="1"/>
</dbReference>
<dbReference type="InterPro" id="IPR001046">
    <property type="entry name" value="NRAMP_fam"/>
</dbReference>
<dbReference type="NCBIfam" id="TIGR01197">
    <property type="entry name" value="nramp"/>
    <property type="match status" value="1"/>
</dbReference>
<dbReference type="NCBIfam" id="NF037982">
    <property type="entry name" value="Nramp_1"/>
    <property type="match status" value="1"/>
</dbReference>
<dbReference type="NCBIfam" id="NF001923">
    <property type="entry name" value="PRK00701.1"/>
    <property type="match status" value="1"/>
</dbReference>
<dbReference type="PANTHER" id="PTHR11706:SF33">
    <property type="entry name" value="NATURAL RESISTANCE-ASSOCIATED MACROPHAGE PROTEIN 2"/>
    <property type="match status" value="1"/>
</dbReference>
<dbReference type="PANTHER" id="PTHR11706">
    <property type="entry name" value="SOLUTE CARRIER PROTEIN FAMILY 11 MEMBER"/>
    <property type="match status" value="1"/>
</dbReference>
<dbReference type="Pfam" id="PF01566">
    <property type="entry name" value="Nramp"/>
    <property type="match status" value="1"/>
</dbReference>
<dbReference type="PRINTS" id="PR00447">
    <property type="entry name" value="NATRESASSCMP"/>
</dbReference>
<keyword id="KW-1003">Cell membrane</keyword>
<keyword id="KW-0406">Ion transport</keyword>
<keyword id="KW-0472">Membrane</keyword>
<keyword id="KW-0769">Symport</keyword>
<keyword id="KW-0812">Transmembrane</keyword>
<keyword id="KW-1133">Transmembrane helix</keyword>
<keyword id="KW-0813">Transport</keyword>
<gene>
    <name evidence="1" type="primary">mntH</name>
    <name type="ordered locus">SE_0803</name>
</gene>
<accession>Q8CPM6</accession>
<sequence length="453" mass="49783">MGVILLNSNNNNHEQQRSLDEINNTINFNHNDSASQKFLAFLGPGLLVAVGYMDPGNWITSMQGGAQYGYTLLFIILISSLSAMLLQSMTVRLGIATGMDLAQMTRHFLNKPVAIMFWIIAELAIIATDIAEVIGSAIALDLIFGIPLIVGALITVFDVFLLLFIMKFGFRKIEAIVGTLIFTVLAIFVFEVYISSPHIIDMLNGFVPHKEIITNQGILYIALGIIGATIMPHNLYLHSSIVQSRKYDRHSIHEKAQAIKYATIDSNIQLSIAFVVNCLLLTLGAALFFGTKTEDLGGFYDLYLALKTEPALGATLGGIMSTLFAVALLASGQNSTITGTLAGQIVMEGFLKLSIPNWLRRLITRSLAVIPVIICLIVFKGNTEKIEQLLVFSQVFLSIALPFSLIPLQLATSNQNLMGPFKNKTWINIISWLLIIVLSGLNVYLIIQTFQEL</sequence>
<reference key="1">
    <citation type="journal article" date="2003" name="Mol. Microbiol.">
        <title>Genome-based analysis of virulence genes in a non-biofilm-forming Staphylococcus epidermidis strain (ATCC 12228).</title>
        <authorList>
            <person name="Zhang Y.-Q."/>
            <person name="Ren S.-X."/>
            <person name="Li H.-L."/>
            <person name="Wang Y.-X."/>
            <person name="Fu G."/>
            <person name="Yang J."/>
            <person name="Qin Z.-Q."/>
            <person name="Miao Y.-G."/>
            <person name="Wang W.-Y."/>
            <person name="Chen R.-S."/>
            <person name="Shen Y."/>
            <person name="Chen Z."/>
            <person name="Yuan Z.-H."/>
            <person name="Zhao G.-P."/>
            <person name="Qu D."/>
            <person name="Danchin A."/>
            <person name="Wen Y.-M."/>
        </authorList>
    </citation>
    <scope>NUCLEOTIDE SEQUENCE [LARGE SCALE GENOMIC DNA]</scope>
    <source>
        <strain>ATCC 12228 / FDA PCI 1200</strain>
    </source>
</reference>
<organism>
    <name type="scientific">Staphylococcus epidermidis (strain ATCC 12228 / FDA PCI 1200)</name>
    <dbReference type="NCBI Taxonomy" id="176280"/>
    <lineage>
        <taxon>Bacteria</taxon>
        <taxon>Bacillati</taxon>
        <taxon>Bacillota</taxon>
        <taxon>Bacilli</taxon>
        <taxon>Bacillales</taxon>
        <taxon>Staphylococcaceae</taxon>
        <taxon>Staphylococcus</taxon>
    </lineage>
</organism>
<feature type="chain" id="PRO_0000212640" description="Divalent metal cation transporter MntH">
    <location>
        <begin position="1"/>
        <end position="453"/>
    </location>
</feature>
<feature type="transmembrane region" description="Helical" evidence="1">
    <location>
        <begin position="39"/>
        <end position="59"/>
    </location>
</feature>
<feature type="transmembrane region" description="Helical" evidence="1">
    <location>
        <begin position="66"/>
        <end position="86"/>
    </location>
</feature>
<feature type="transmembrane region" description="Helical" evidence="1">
    <location>
        <begin position="114"/>
        <end position="134"/>
    </location>
</feature>
<feature type="transmembrane region" description="Helical" evidence="1">
    <location>
        <begin position="146"/>
        <end position="166"/>
    </location>
</feature>
<feature type="transmembrane region" description="Helical" evidence="1">
    <location>
        <begin position="175"/>
        <end position="195"/>
    </location>
</feature>
<feature type="transmembrane region" description="Helical" evidence="1">
    <location>
        <begin position="217"/>
        <end position="237"/>
    </location>
</feature>
<feature type="transmembrane region" description="Helical" evidence="1">
    <location>
        <begin position="270"/>
        <end position="290"/>
    </location>
</feature>
<feature type="transmembrane region" description="Helical" evidence="1">
    <location>
        <begin position="310"/>
        <end position="330"/>
    </location>
</feature>
<feature type="transmembrane region" description="Helical" evidence="1">
    <location>
        <begin position="362"/>
        <end position="382"/>
    </location>
</feature>
<feature type="transmembrane region" description="Helical" evidence="1">
    <location>
        <begin position="388"/>
        <end position="408"/>
    </location>
</feature>
<feature type="transmembrane region" description="Helical" evidence="1">
    <location>
        <begin position="427"/>
        <end position="447"/>
    </location>
</feature>
<comment type="function">
    <text evidence="1">H(+)-stimulated, divalent metal cation uptake system.</text>
</comment>
<comment type="subcellular location">
    <subcellularLocation>
        <location evidence="1">Cell membrane</location>
        <topology evidence="1">Multi-pass membrane protein</topology>
    </subcellularLocation>
</comment>
<comment type="similarity">
    <text evidence="1">Belongs to the NRAMP family.</text>
</comment>